<comment type="function">
    <molecule>Gag-Pol polyprotein</molecule>
    <text evidence="1">Plays a role in budding and is processed by the viral protease during virion maturation outside the cell. During budding, it recruits, in a PPXY-dependent or independent manner, Nedd4-like ubiquitin ligases that conjugate ubiquitin molecules to Gag-Pol, or to Gag-Pol binding host factors. Interaction with HECT ubiquitin ligases probably links the viral protein to the host ESCRT pathway and facilitates release.</text>
</comment>
<comment type="function">
    <molecule>Matrix protein p15</molecule>
    <text evidence="1">Targets Gag and gag-pol polyproteins to the plasma membrane via a multipartite membrane binding signal, that includes its myristoylated N-terminus. Also mediates nuclear localization of the pre-integration complex.</text>
</comment>
<comment type="function">
    <molecule>RNA-binding phosphoprotein p12</molecule>
    <text evidence="3">Constituent of the pre-integration complex (PIC) which tethers the latter to mitotic chromosomes. This allows the integration of the viral genome into the host DNA.</text>
</comment>
<comment type="function">
    <molecule>Capsid protein p30</molecule>
    <text evidence="2">Forms the spherical core of the virion that encapsulates the genomic RNA-nucleocapsid complex.</text>
</comment>
<comment type="function">
    <molecule>Nucleocapsid protein p10-Pol</molecule>
    <text evidence="1 3">Involved in the packaging and encapsidation of two copies of the genome. Binds with high affinity to conserved UCUG elements within the packaging signal, located near the 5'-end of the genome. This binding is dependent on genome dimerization. Acts as a nucleic acid chaperone which is involved in rearrangement of nucleic acid secondary structures during gRNA retrotranscription.</text>
</comment>
<comment type="function">
    <molecule>Protease</molecule>
    <text evidence="1 7">The aspartyl protease mediates proteolytic cleavages of Gag and Gag-Pol polyproteins during or shortly after the release of the virion from the plasma membrane. Cleavages take place as an ordered, step-wise cascade to yield mature proteins. This process is called maturation. Displays maximal activity during the budding process just prior to particle release from the cell (Potential). Cleaves the translation initiation factor eIF4G leading to the inhibition of host cap-dependent translation (By similarity).</text>
</comment>
<comment type="function">
    <molecule>Reverse transcriptase/ribonuclease H</molecule>
    <text evidence="5">RT is a multifunctional enzyme that converts the viral dimeric RNA genome into dsDNA in the cytoplasm, shortly after virus entry into the cell. This enzyme displays a DNA polymerase activity that can copy either DNA or RNA templates, and a ribonuclease H (RNase H) activity that cleaves the RNA strand of RNA-DNA heteroduplexes in a partially processive 3' to 5' endonucleasic mode. Conversion of viral genomic RNA into dsDNA requires many steps. A tRNA binds to the primer-binding site (PBS) situated at the 5' end of the viral RNA. RT uses the 3' end of the tRNA primer to perform a short round of RNA-dependent minus-strand DNA synthesis. The reading proceeds through the U5 region and ends after the repeated (R) region which is present at both ends of viral RNA. The portion of the RNA-DNA heteroduplex is digested by the RNase H, resulting in a ssDNA product attached to the tRNA primer. This ssDNA/tRNA hybridizes with the identical R region situated at the 3' end of viral RNA. This template exchange, known as minus-strand DNA strong stop transfer, can be either intra- or intermolecular. RT uses the 3' end of this newly synthesized short ssDNA to perform the RNA-dependent minus-strand DNA synthesis of the whole template. RNase H digests the RNA template except for a polypurine tract (PPT) situated at the 5' end of the genome. It is not clear if both polymerase and RNase H activities are simultaneous. RNase H probably can proceed both in a polymerase-dependent (RNA cut into small fragments by the same RT performing DNA synthesis) and a polymerase-independent mode (cleavage of remaining RNA fragments by free RTs). Secondly, RT performs DNA-directed plus-strand DNA synthesis using the PPT that has not been removed by RNase H as primers. PPT and tRNA primers are then removed by RNase H. The 3' and 5' ssDNA PBS regions hybridize to form a circular dsDNA intermediate. Strand displacement synthesis by RT to the PBS and PPT ends produces a blunt ended, linear dsDNA copy of the viral genome that includes long terminal repeats (LTRs) at both ends.</text>
</comment>
<comment type="function">
    <molecule>Integrase</molecule>
    <text evidence="3">Catalyzes viral DNA integration into the host chromosome, by performing a series of DNA cutting and joining reactions. This enzyme activity takes place after virion entry into a cell and reverse transcription of the RNA genome in dsDNA. The first step in the integration process is 3' processing. This step requires a complex comprising the viral genome, matrix protein and integrase. This complex is called the pre-integration complex (PIC). The integrase protein removes 2 nucleotides from each 3' end of the viral DNA, leaving recessed CA OH's at the 3' ends. In the second step that requires cell division, the PIC enters cell nucleus. In the third step, termed strand transfer, the integrase protein joins the previously processed 3' ends to the 5' ends of strands of target cellular DNA at the site of integration. The last step is viral DNA integration into host chromosome.</text>
</comment>
<comment type="catalytic activity">
    <reaction evidence="8">
        <text>DNA(n) + a 2'-deoxyribonucleoside 5'-triphosphate = DNA(n+1) + diphosphate</text>
        <dbReference type="Rhea" id="RHEA:22508"/>
        <dbReference type="Rhea" id="RHEA-COMP:17339"/>
        <dbReference type="Rhea" id="RHEA-COMP:17340"/>
        <dbReference type="ChEBI" id="CHEBI:33019"/>
        <dbReference type="ChEBI" id="CHEBI:61560"/>
        <dbReference type="ChEBI" id="CHEBI:173112"/>
        <dbReference type="EC" id="2.7.7.49"/>
    </reaction>
</comment>
<comment type="catalytic activity">
    <reaction evidence="8">
        <text>DNA(n) + a 2'-deoxyribonucleoside 5'-triphosphate = DNA(n+1) + diphosphate</text>
        <dbReference type="Rhea" id="RHEA:22508"/>
        <dbReference type="Rhea" id="RHEA-COMP:17339"/>
        <dbReference type="Rhea" id="RHEA-COMP:17340"/>
        <dbReference type="ChEBI" id="CHEBI:33019"/>
        <dbReference type="ChEBI" id="CHEBI:61560"/>
        <dbReference type="ChEBI" id="CHEBI:173112"/>
        <dbReference type="EC" id="2.7.7.7"/>
    </reaction>
</comment>
<comment type="catalytic activity">
    <reaction evidence="9">
        <text>Endonucleolytic cleavage to 5'-phosphomonoester.</text>
        <dbReference type="EC" id="3.1.26.4"/>
    </reaction>
</comment>
<comment type="cofactor">
    <cofactor evidence="8">
        <name>Mg(2+)</name>
        <dbReference type="ChEBI" id="CHEBI:18420"/>
    </cofactor>
    <text evidence="8">The RT polymerase active site binds 2 magnesium ions.</text>
</comment>
<comment type="cofactor">
    <cofactor evidence="3">
        <name>Mg(2+)</name>
        <dbReference type="ChEBI" id="CHEBI:18420"/>
    </cofactor>
    <text evidence="3">Binds 1 magnesium ion for ribonuclease H (RNase H) activity.</text>
</comment>
<comment type="cofactor">
    <cofactor evidence="3">
        <name>Mg(2+)</name>
        <dbReference type="ChEBI" id="CHEBI:18420"/>
    </cofactor>
    <text evidence="3">Magnesium ions are required for integrase activity. Binds at least 1, maybe 2 magnesium ions.</text>
</comment>
<comment type="activity regulation">
    <molecule>Protease</molecule>
    <text evidence="3">Most efficiently inhibited by Amprenavir, which is able to block Gag-Pol processing in infected cells.</text>
</comment>
<comment type="subunit">
    <molecule>Capsid protein p30</molecule>
    <text evidence="3">Homohexamer; further associates as homomultimer. The virus core is composed of a lattice formed from hexagonal rings, each containing six capsid monomers. Interacts with mouse UBE2I and mouse PIAS4.</text>
</comment>
<comment type="subunit">
    <molecule>Gag-Pol polyprotein</molecule>
    <text evidence="3">Interacts (via PPXY motif) with host NEDD4 (By similarity). Interacts (via PSAP motif) with host TSG101. Interacts (via LYPX(n)L motif) with host PDCD6IP.</text>
</comment>
<comment type="subunit">
    <molecule>Reverse transcriptase/ribonuclease H</molecule>
    <text evidence="3">The reverse transcriptase is a monomer (Potential). Interacts (via RNase domains) with host release factor ETF1; this interaction is essential for translational readthrough of amber codon between viral gag and pol genes, as well as for viral replication.</text>
</comment>
<comment type="subunit">
    <molecule>Integrase</molecule>
    <text evidence="3">Homodimer.</text>
</comment>
<comment type="subcellular location">
    <molecule>Gag-Pol polyprotein</molecule>
    <subcellularLocation>
        <location evidence="1">Virion</location>
    </subcellularLocation>
    <subcellularLocation>
        <location evidence="1">Host cell membrane</location>
        <topology evidence="1">Lipid-anchor</topology>
    </subcellularLocation>
    <subcellularLocation>
        <location evidence="1">Host late endosome membrane</location>
        <topology evidence="1">Lipid-anchor</topology>
    </subcellularLocation>
    <subcellularLocation>
        <location evidence="4">Host endosome</location>
        <location evidence="4">Host multivesicular body</location>
    </subcellularLocation>
    <text evidence="3">These locations are probably linked to virus assembly sites.</text>
</comment>
<comment type="subcellular location">
    <molecule>Matrix protein p15</molecule>
    <subcellularLocation>
        <location evidence="3">Virion</location>
    </subcellularLocation>
</comment>
<comment type="subcellular location">
    <molecule>Capsid protein p30</molecule>
    <subcellularLocation>
        <location evidence="3">Virion</location>
    </subcellularLocation>
</comment>
<comment type="subcellular location">
    <molecule>Nucleocapsid protein p10-Pol</molecule>
    <subcellularLocation>
        <location evidence="3">Virion</location>
    </subcellularLocation>
</comment>
<comment type="subcellular location">
    <molecule>Protease</molecule>
    <subcellularLocation>
        <location evidence="3">Virion</location>
    </subcellularLocation>
</comment>
<comment type="subcellular location">
    <molecule>RNA-binding phosphoprotein p12</molecule>
    <subcellularLocation>
        <location evidence="3">Host cytoplasm</location>
    </subcellularLocation>
    <text evidence="3">Localizes to the host cytoplasm early in infection and binds to the mitotic chromosomes later on.</text>
</comment>
<comment type="domain">
    <molecule>Gag-Pol polyprotein</molecule>
    <text evidence="1">Late-budding domains (L domains) are short sequence motifs essential for viral particle release. They can occur individually or in close proximity within structural proteins. They interacts with sorting cellular proteins of the multivesicular body (MVB) pathway. Most of these proteins are class E vacuolar protein sorting factors belonging to ESCRT-I, ESCRT-II or ESCRT-III complexes. RNA-binding phosphoprotein p12 contains one L domain: a PPXY motif which potentially interacts with the WW domain 3 of NEDD4 E3 ubiquitin ligase. PPXY motif is essential for virus egress. Matrix protein p15 contains one L domain: a PTAP/PSAP motif, which potentially interacts with the UEV domain of TSG101. The junction between the matrix protein p15 and RNA-binding phosphoprotein p12 also contains one L domain: a LYPX(n)L motif which potentially interacts with PDCD6IP. Both PSAP and LYPX(n)L domains might play little to no role in budding and possibly drive residual virus release. contains.</text>
</comment>
<comment type="PTM">
    <molecule>Gag-Pol polyprotein</molecule>
    <text evidence="1">Ubiquitinated by ITCH. Gag can recruit the ubiquitin ligase Itch in an L domain-independent manner to facilitate virus release via a mechanism that involves Gag ubiquitination.</text>
</comment>
<comment type="PTM">
    <molecule>Gag-Pol polyprotein</molecule>
    <text evidence="3">Specific enzymatic cleavages by the viral protease yield mature proteins. The protease is released by autocatalytic cleavage. The polyprotein is cleaved during and after budding, this process is termed maturation.</text>
</comment>
<comment type="PTM">
    <molecule>Capsid protein p30</molecule>
    <text evidence="3">Sumoylated; which is required for virus replication.</text>
</comment>
<comment type="PTM">
    <molecule>RNA-binding phosphoprotein p12</molecule>
    <text evidence="3">Phosphorylated on serine residues.</text>
</comment>
<comment type="miscellaneous">
    <molecule>Gag-Pol polyprotein</molecule>
    <text evidence="3">This protein is translated as a gag-pol fusion protein by episodic readthrough of the gag protein termination codon. Readthrough of the terminator codon TAG occurs between the codons for 536-Asp and 538-Gly.</text>
</comment>
<comment type="miscellaneous">
    <molecule>Nucleocapsid protein p10-Pol</molecule>
    <text evidence="3">Nucleocapsid protein p10-Pol released from Pol polyprotein (NC-pol) is a few amino acids shorter than the nucleocapsid protein p10 released from Gag polyprotein (NC-gag).</text>
</comment>
<comment type="miscellaneous">
    <molecule>Reverse transcriptase/ribonuclease H</molecule>
    <text evidence="8">The reverse transcriptase is an error-prone enzyme that lacks a proof-reading function. High mutations rate is a direct consequence of this characteristic. RT also displays frequent template switching leading to high recombination rate. Recombination mostly occurs between homologous regions of the two copackaged RNA genomes. If these two RNA molecules derive from different viral strains, reverse transcription will give rise to highly recombinated proviral DNAs.</text>
</comment>
<dbReference type="EC" id="3.4.23.-" evidence="7"/>
<dbReference type="EC" id="2.7.7.49" evidence="8"/>
<dbReference type="EC" id="2.7.7.7" evidence="8"/>
<dbReference type="EC" id="3.1.26.4" evidence="9"/>
<dbReference type="EC" id="2.7.7.-" evidence="3"/>
<dbReference type="EC" id="3.1.-.-" evidence="3"/>
<dbReference type="EMBL" id="X57540">
    <property type="status" value="NOT_ANNOTATED_CDS"/>
    <property type="molecule type" value="Genomic_DNA"/>
</dbReference>
<dbReference type="EMBL" id="M14702">
    <property type="protein sequence ID" value="AAA46511.1"/>
    <property type="molecule type" value="Genomic_DNA"/>
</dbReference>
<dbReference type="PIR" id="A26103">
    <property type="entry name" value="A26103"/>
</dbReference>
<dbReference type="SMR" id="P08361"/>
<dbReference type="GO" id="GO:0044185">
    <property type="term" value="C:host cell late endosome membrane"/>
    <property type="evidence" value="ECO:0007669"/>
    <property type="project" value="UniProtKB-SubCell"/>
</dbReference>
<dbReference type="GO" id="GO:0020002">
    <property type="term" value="C:host cell plasma membrane"/>
    <property type="evidence" value="ECO:0007669"/>
    <property type="project" value="UniProtKB-SubCell"/>
</dbReference>
<dbReference type="GO" id="GO:0072494">
    <property type="term" value="C:host multivesicular body"/>
    <property type="evidence" value="ECO:0007669"/>
    <property type="project" value="UniProtKB-SubCell"/>
</dbReference>
<dbReference type="GO" id="GO:0016020">
    <property type="term" value="C:membrane"/>
    <property type="evidence" value="ECO:0007669"/>
    <property type="project" value="UniProtKB-KW"/>
</dbReference>
<dbReference type="GO" id="GO:0019013">
    <property type="term" value="C:viral nucleocapsid"/>
    <property type="evidence" value="ECO:0007669"/>
    <property type="project" value="UniProtKB-KW"/>
</dbReference>
<dbReference type="GO" id="GO:0004190">
    <property type="term" value="F:aspartic-type endopeptidase activity"/>
    <property type="evidence" value="ECO:0007669"/>
    <property type="project" value="UniProtKB-KW"/>
</dbReference>
<dbReference type="GO" id="GO:0003677">
    <property type="term" value="F:DNA binding"/>
    <property type="evidence" value="ECO:0007669"/>
    <property type="project" value="UniProtKB-KW"/>
</dbReference>
<dbReference type="GO" id="GO:0003887">
    <property type="term" value="F:DNA-directed DNA polymerase activity"/>
    <property type="evidence" value="ECO:0007669"/>
    <property type="project" value="UniProtKB-KW"/>
</dbReference>
<dbReference type="GO" id="GO:0003723">
    <property type="term" value="F:RNA binding"/>
    <property type="evidence" value="ECO:0007669"/>
    <property type="project" value="UniProtKB-KW"/>
</dbReference>
<dbReference type="GO" id="GO:0003964">
    <property type="term" value="F:RNA-directed DNA polymerase activity"/>
    <property type="evidence" value="ECO:0007669"/>
    <property type="project" value="UniProtKB-KW"/>
</dbReference>
<dbReference type="GO" id="GO:0004523">
    <property type="term" value="F:RNA-DNA hybrid ribonuclease activity"/>
    <property type="evidence" value="ECO:0007669"/>
    <property type="project" value="UniProtKB-EC"/>
</dbReference>
<dbReference type="GO" id="GO:0039660">
    <property type="term" value="F:structural constituent of virion"/>
    <property type="evidence" value="ECO:0007669"/>
    <property type="project" value="UniProtKB-KW"/>
</dbReference>
<dbReference type="GO" id="GO:0008270">
    <property type="term" value="F:zinc ion binding"/>
    <property type="evidence" value="ECO:0007669"/>
    <property type="project" value="UniProtKB-KW"/>
</dbReference>
<dbReference type="GO" id="GO:0015074">
    <property type="term" value="P:DNA integration"/>
    <property type="evidence" value="ECO:0007669"/>
    <property type="project" value="UniProtKB-KW"/>
</dbReference>
<dbReference type="GO" id="GO:0006310">
    <property type="term" value="P:DNA recombination"/>
    <property type="evidence" value="ECO:0007669"/>
    <property type="project" value="UniProtKB-KW"/>
</dbReference>
<dbReference type="GO" id="GO:0075713">
    <property type="term" value="P:establishment of integrated proviral latency"/>
    <property type="evidence" value="ECO:0007669"/>
    <property type="project" value="UniProtKB-KW"/>
</dbReference>
<dbReference type="GO" id="GO:0006508">
    <property type="term" value="P:proteolysis"/>
    <property type="evidence" value="ECO:0007669"/>
    <property type="project" value="UniProtKB-KW"/>
</dbReference>
<dbReference type="GO" id="GO:0046718">
    <property type="term" value="P:symbiont entry into host cell"/>
    <property type="evidence" value="ECO:0007669"/>
    <property type="project" value="UniProtKB-KW"/>
</dbReference>
<dbReference type="GO" id="GO:0039657">
    <property type="term" value="P:symbiont-mediated suppression of host gene expression"/>
    <property type="evidence" value="ECO:0007669"/>
    <property type="project" value="UniProtKB-KW"/>
</dbReference>
<dbReference type="GO" id="GO:0044826">
    <property type="term" value="P:viral genome integration into host DNA"/>
    <property type="evidence" value="ECO:0007669"/>
    <property type="project" value="UniProtKB-KW"/>
</dbReference>
<dbReference type="GO" id="GO:0019068">
    <property type="term" value="P:virion assembly"/>
    <property type="evidence" value="ECO:0007669"/>
    <property type="project" value="InterPro"/>
</dbReference>
<dbReference type="CDD" id="cd09273">
    <property type="entry name" value="RNase_HI_RT_Bel"/>
    <property type="match status" value="1"/>
</dbReference>
<dbReference type="CDD" id="cd06095">
    <property type="entry name" value="RP_RTVL_H_like"/>
    <property type="match status" value="1"/>
</dbReference>
<dbReference type="CDD" id="cd03715">
    <property type="entry name" value="RT_ZFREV_like"/>
    <property type="match status" value="1"/>
</dbReference>
<dbReference type="FunFam" id="1.10.150.180:FF:000001">
    <property type="entry name" value="Gag polyprotein"/>
    <property type="match status" value="1"/>
</dbReference>
<dbReference type="FunFam" id="2.40.70.10:FF:000087">
    <property type="entry name" value="Gag-Pol polyprotein"/>
    <property type="match status" value="1"/>
</dbReference>
<dbReference type="FunFam" id="3.30.420.10:FF:000094">
    <property type="entry name" value="Gag-Pol polyprotein"/>
    <property type="match status" value="1"/>
</dbReference>
<dbReference type="FunFam" id="3.30.420.10:FF:000102">
    <property type="entry name" value="Gag-Pol polyprotein"/>
    <property type="match status" value="1"/>
</dbReference>
<dbReference type="FunFam" id="3.30.70.270:FF:000020">
    <property type="entry name" value="Transposon Tf2-6 polyprotein-like Protein"/>
    <property type="match status" value="1"/>
</dbReference>
<dbReference type="Gene3D" id="1.10.340.70">
    <property type="match status" value="1"/>
</dbReference>
<dbReference type="Gene3D" id="2.30.30.850">
    <property type="match status" value="1"/>
</dbReference>
<dbReference type="Gene3D" id="3.10.20.370">
    <property type="match status" value="1"/>
</dbReference>
<dbReference type="Gene3D" id="3.30.70.270">
    <property type="match status" value="2"/>
</dbReference>
<dbReference type="Gene3D" id="2.40.70.10">
    <property type="entry name" value="Acid Proteases"/>
    <property type="match status" value="1"/>
</dbReference>
<dbReference type="Gene3D" id="1.10.150.180">
    <property type="entry name" value="Gamma-retroviral matrix domain"/>
    <property type="match status" value="1"/>
</dbReference>
<dbReference type="Gene3D" id="3.10.10.10">
    <property type="entry name" value="HIV Type 1 Reverse Transcriptase, subunit A, domain 1"/>
    <property type="match status" value="1"/>
</dbReference>
<dbReference type="Gene3D" id="1.10.375.10">
    <property type="entry name" value="Human Immunodeficiency Virus Type 1 Capsid Protein"/>
    <property type="match status" value="1"/>
</dbReference>
<dbReference type="Gene3D" id="3.30.420.10">
    <property type="entry name" value="Ribonuclease H-like superfamily/Ribonuclease H"/>
    <property type="match status" value="2"/>
</dbReference>
<dbReference type="Gene3D" id="4.10.60.10">
    <property type="entry name" value="Zinc finger, CCHC-type"/>
    <property type="match status" value="1"/>
</dbReference>
<dbReference type="InterPro" id="IPR001969">
    <property type="entry name" value="Aspartic_peptidase_AS"/>
</dbReference>
<dbReference type="InterPro" id="IPR043502">
    <property type="entry name" value="DNA/RNA_pol_sf"/>
</dbReference>
<dbReference type="InterPro" id="IPR000840">
    <property type="entry name" value="G_retro_matrix"/>
</dbReference>
<dbReference type="InterPro" id="IPR036946">
    <property type="entry name" value="G_retro_matrix_sf"/>
</dbReference>
<dbReference type="InterPro" id="IPR039464">
    <property type="entry name" value="Gag-pol_Znf-H3C2"/>
</dbReference>
<dbReference type="InterPro" id="IPR002079">
    <property type="entry name" value="Gag_p12"/>
</dbReference>
<dbReference type="InterPro" id="IPR003036">
    <property type="entry name" value="Gag_P30"/>
</dbReference>
<dbReference type="InterPro" id="IPR001584">
    <property type="entry name" value="Integrase_cat-core"/>
</dbReference>
<dbReference type="InterPro" id="IPR040643">
    <property type="entry name" value="MLVIN_C"/>
</dbReference>
<dbReference type="InterPro" id="IPR001995">
    <property type="entry name" value="Peptidase_A2_cat"/>
</dbReference>
<dbReference type="InterPro" id="IPR021109">
    <property type="entry name" value="Peptidase_aspartic_dom_sf"/>
</dbReference>
<dbReference type="InterPro" id="IPR018061">
    <property type="entry name" value="Retropepsins"/>
</dbReference>
<dbReference type="InterPro" id="IPR008919">
    <property type="entry name" value="Retrov_capsid_N"/>
</dbReference>
<dbReference type="InterPro" id="IPR050462">
    <property type="entry name" value="Retroviral_Gag-Pol_poly"/>
</dbReference>
<dbReference type="InterPro" id="IPR010999">
    <property type="entry name" value="Retrovr_matrix"/>
</dbReference>
<dbReference type="InterPro" id="IPR043128">
    <property type="entry name" value="Rev_trsase/Diguanyl_cyclase"/>
</dbReference>
<dbReference type="InterPro" id="IPR012337">
    <property type="entry name" value="RNaseH-like_sf"/>
</dbReference>
<dbReference type="InterPro" id="IPR002156">
    <property type="entry name" value="RNaseH_domain"/>
</dbReference>
<dbReference type="InterPro" id="IPR036397">
    <property type="entry name" value="RNaseH_sf"/>
</dbReference>
<dbReference type="InterPro" id="IPR000477">
    <property type="entry name" value="RT_dom"/>
</dbReference>
<dbReference type="InterPro" id="IPR041577">
    <property type="entry name" value="RT_RNaseH_2"/>
</dbReference>
<dbReference type="InterPro" id="IPR001878">
    <property type="entry name" value="Znf_CCHC"/>
</dbReference>
<dbReference type="InterPro" id="IPR036875">
    <property type="entry name" value="Znf_CCHC_sf"/>
</dbReference>
<dbReference type="PANTHER" id="PTHR33166">
    <property type="entry name" value="GAG_P30 DOMAIN-CONTAINING PROTEIN"/>
    <property type="match status" value="1"/>
</dbReference>
<dbReference type="Pfam" id="PF01140">
    <property type="entry name" value="Gag_MA"/>
    <property type="match status" value="1"/>
</dbReference>
<dbReference type="Pfam" id="PF01141">
    <property type="entry name" value="Gag_p12"/>
    <property type="match status" value="1"/>
</dbReference>
<dbReference type="Pfam" id="PF02093">
    <property type="entry name" value="Gag_p30"/>
    <property type="match status" value="1"/>
</dbReference>
<dbReference type="Pfam" id="PF18697">
    <property type="entry name" value="MLVIN_C"/>
    <property type="match status" value="1"/>
</dbReference>
<dbReference type="Pfam" id="PF00075">
    <property type="entry name" value="RNase_H"/>
    <property type="match status" value="1"/>
</dbReference>
<dbReference type="Pfam" id="PF17919">
    <property type="entry name" value="RT_RNaseH_2"/>
    <property type="match status" value="1"/>
</dbReference>
<dbReference type="Pfam" id="PF00665">
    <property type="entry name" value="rve"/>
    <property type="match status" value="1"/>
</dbReference>
<dbReference type="Pfam" id="PF00077">
    <property type="entry name" value="RVP"/>
    <property type="match status" value="1"/>
</dbReference>
<dbReference type="Pfam" id="PF00078">
    <property type="entry name" value="RVT_1"/>
    <property type="match status" value="1"/>
</dbReference>
<dbReference type="Pfam" id="PF00098">
    <property type="entry name" value="zf-CCHC"/>
    <property type="match status" value="1"/>
</dbReference>
<dbReference type="Pfam" id="PF16721">
    <property type="entry name" value="zf-H3C2"/>
    <property type="match status" value="1"/>
</dbReference>
<dbReference type="SMART" id="SM00343">
    <property type="entry name" value="ZnF_C2HC"/>
    <property type="match status" value="1"/>
</dbReference>
<dbReference type="SUPFAM" id="SSF50630">
    <property type="entry name" value="Acid proteases"/>
    <property type="match status" value="1"/>
</dbReference>
<dbReference type="SUPFAM" id="SSF56672">
    <property type="entry name" value="DNA/RNA polymerases"/>
    <property type="match status" value="1"/>
</dbReference>
<dbReference type="SUPFAM" id="SSF47836">
    <property type="entry name" value="Retroviral matrix proteins"/>
    <property type="match status" value="1"/>
</dbReference>
<dbReference type="SUPFAM" id="SSF47943">
    <property type="entry name" value="Retrovirus capsid protein, N-terminal core domain"/>
    <property type="match status" value="1"/>
</dbReference>
<dbReference type="SUPFAM" id="SSF57756">
    <property type="entry name" value="Retrovirus zinc finger-like domains"/>
    <property type="match status" value="1"/>
</dbReference>
<dbReference type="SUPFAM" id="SSF53098">
    <property type="entry name" value="Ribonuclease H-like"/>
    <property type="match status" value="2"/>
</dbReference>
<dbReference type="PROSITE" id="PS50175">
    <property type="entry name" value="ASP_PROT_RETROV"/>
    <property type="match status" value="1"/>
</dbReference>
<dbReference type="PROSITE" id="PS00141">
    <property type="entry name" value="ASP_PROTEASE"/>
    <property type="match status" value="1"/>
</dbReference>
<dbReference type="PROSITE" id="PS50994">
    <property type="entry name" value="INTEGRASE"/>
    <property type="match status" value="1"/>
</dbReference>
<dbReference type="PROSITE" id="PS50879">
    <property type="entry name" value="RNASE_H_1"/>
    <property type="match status" value="1"/>
</dbReference>
<dbReference type="PROSITE" id="PS50878">
    <property type="entry name" value="RT_POL"/>
    <property type="match status" value="1"/>
</dbReference>
<dbReference type="PROSITE" id="PS50158">
    <property type="entry name" value="ZF_CCHC"/>
    <property type="match status" value="1"/>
</dbReference>
<feature type="initiator methionine" description="Removed" evidence="5">
    <location>
        <position position="1"/>
    </location>
</feature>
<feature type="chain" id="PRO_0000125491" description="Gag-Pol polyprotein">
    <location>
        <begin position="2"/>
        <end position="1733"/>
    </location>
</feature>
<feature type="chain" id="PRO_0000442860" description="Matrix protein p15">
    <location>
        <begin position="2"/>
        <end position="129"/>
    </location>
</feature>
<feature type="chain" id="PRO_0000442861" description="RNA-binding phosphoprotein p12">
    <location>
        <begin position="130"/>
        <end position="213"/>
    </location>
</feature>
<feature type="chain" id="PRO_0000442862" description="Capsid protein p30">
    <location>
        <begin position="214"/>
        <end position="476"/>
    </location>
</feature>
<feature type="chain" id="PRO_0000442863" description="Nucleocapsid protein p10-Pol">
    <location>
        <begin position="477"/>
        <end position="532"/>
    </location>
</feature>
<feature type="chain" id="PRO_0000442864" description="Protease" evidence="3">
    <location>
        <begin position="533"/>
        <end position="657"/>
    </location>
</feature>
<feature type="chain" id="PRO_0000442865" description="Reverse transcriptase/ribonuclease H">
    <location>
        <begin position="658"/>
        <end position="1328"/>
    </location>
</feature>
<feature type="chain" id="PRO_0000390822" description="Integrase">
    <location>
        <begin position="1329"/>
        <end position="1733"/>
    </location>
</feature>
<feature type="domain" description="Peptidase A2" evidence="7">
    <location>
        <begin position="559"/>
        <end position="629"/>
    </location>
</feature>
<feature type="domain" description="Reverse transcriptase" evidence="8">
    <location>
        <begin position="739"/>
        <end position="930"/>
    </location>
</feature>
<feature type="domain" description="RNase H type-1" evidence="9">
    <location>
        <begin position="1172"/>
        <end position="1318"/>
    </location>
</feature>
<feature type="domain" description="Integrase catalytic" evidence="10">
    <location>
        <begin position="1442"/>
        <end position="1600"/>
    </location>
</feature>
<feature type="zinc finger region" description="CCHC-type" evidence="6">
    <location>
        <begin position="500"/>
        <end position="517"/>
    </location>
</feature>
<feature type="zinc finger region" description="HHCC-type" evidence="3">
    <location>
        <begin position="1385"/>
        <end position="1425"/>
    </location>
</feature>
<feature type="region of interest" description="Disordered" evidence="11">
    <location>
        <begin position="112"/>
        <end position="196"/>
    </location>
</feature>
<feature type="region of interest" description="Disordered" evidence="11">
    <location>
        <begin position="202"/>
        <end position="221"/>
    </location>
</feature>
<feature type="region of interest" description="Interaction with host PIAS4" evidence="1">
    <location>
        <begin position="343"/>
        <end position="391"/>
    </location>
</feature>
<feature type="region of interest" description="Interaction with host UBE2I" evidence="1">
    <location>
        <begin position="428"/>
        <end position="433"/>
    </location>
</feature>
<feature type="region of interest" description="Disordered" evidence="11">
    <location>
        <begin position="432"/>
        <end position="496"/>
    </location>
</feature>
<feature type="region of interest" description="Disordered" evidence="11">
    <location>
        <begin position="511"/>
        <end position="550"/>
    </location>
</feature>
<feature type="coiled-coil region" evidence="5">
    <location>
        <begin position="436"/>
        <end position="476"/>
    </location>
</feature>
<feature type="short sequence motif" description="PTAP/PSAP motif" evidence="1">
    <location>
        <begin position="109"/>
        <end position="112"/>
    </location>
</feature>
<feature type="short sequence motif" description="LYPX(n)L motif" evidence="1">
    <location>
        <begin position="128"/>
        <end position="132"/>
    </location>
</feature>
<feature type="short sequence motif" description="PPXY motif" evidence="1">
    <location>
        <begin position="160"/>
        <end position="163"/>
    </location>
</feature>
<feature type="compositionally biased region" description="Pro residues" evidence="11">
    <location>
        <begin position="112"/>
        <end position="121"/>
    </location>
</feature>
<feature type="compositionally biased region" description="Pro residues" evidence="11">
    <location>
        <begin position="159"/>
        <end position="170"/>
    </location>
</feature>
<feature type="compositionally biased region" description="Basic and acidic residues" evidence="11">
    <location>
        <begin position="432"/>
        <end position="464"/>
    </location>
</feature>
<feature type="compositionally biased region" description="Basic and acidic residues" evidence="11">
    <location>
        <begin position="484"/>
        <end position="496"/>
    </location>
</feature>
<feature type="active site" description="Protease; shared with dimeric partner" evidence="7">
    <location>
        <position position="564"/>
    </location>
</feature>
<feature type="binding site" evidence="8">
    <location>
        <position position="807"/>
    </location>
    <ligand>
        <name>Mg(2+)</name>
        <dbReference type="ChEBI" id="CHEBI:18420"/>
        <label>1</label>
        <note>catalytic; for reverse transcriptase activity</note>
    </ligand>
</feature>
<feature type="binding site" evidence="8">
    <location>
        <position position="881"/>
    </location>
    <ligand>
        <name>Mg(2+)</name>
        <dbReference type="ChEBI" id="CHEBI:18420"/>
        <label>1</label>
        <note>catalytic; for reverse transcriptase activity</note>
    </ligand>
</feature>
<feature type="binding site" evidence="8">
    <location>
        <position position="882"/>
    </location>
    <ligand>
        <name>Mg(2+)</name>
        <dbReference type="ChEBI" id="CHEBI:18420"/>
        <label>1</label>
        <note>catalytic; for reverse transcriptase activity</note>
    </ligand>
</feature>
<feature type="binding site" evidence="9">
    <location>
        <position position="1181"/>
    </location>
    <ligand>
        <name>Mg(2+)</name>
        <dbReference type="ChEBI" id="CHEBI:18420"/>
        <label>2</label>
        <note>catalytic; for RNase H activity</note>
    </ligand>
</feature>
<feature type="binding site" evidence="9">
    <location>
        <position position="1219"/>
    </location>
    <ligand>
        <name>Mg(2+)</name>
        <dbReference type="ChEBI" id="CHEBI:18420"/>
        <label>2</label>
        <note>catalytic; for RNase H activity</note>
    </ligand>
</feature>
<feature type="binding site" evidence="9">
    <location>
        <position position="1240"/>
    </location>
    <ligand>
        <name>Mg(2+)</name>
        <dbReference type="ChEBI" id="CHEBI:18420"/>
        <label>2</label>
        <note>catalytic; for RNase H activity</note>
    </ligand>
</feature>
<feature type="binding site" evidence="9">
    <location>
        <position position="1310"/>
    </location>
    <ligand>
        <name>Mg(2+)</name>
        <dbReference type="ChEBI" id="CHEBI:18420"/>
        <label>2</label>
        <note>catalytic; for RNase H activity</note>
    </ligand>
</feature>
<feature type="binding site" evidence="10">
    <location>
        <position position="1453"/>
    </location>
    <ligand>
        <name>Mg(2+)</name>
        <dbReference type="ChEBI" id="CHEBI:18420"/>
        <label>3</label>
        <note>catalytic; for integrase activity</note>
    </ligand>
</feature>
<feature type="binding site" evidence="10">
    <location>
        <position position="1512"/>
    </location>
    <ligand>
        <name>Mg(2+)</name>
        <dbReference type="ChEBI" id="CHEBI:18420"/>
        <label>3</label>
        <note>catalytic; for integrase activity</note>
    </ligand>
</feature>
<feature type="site" description="Cleavage; by viral protease" evidence="3">
    <location>
        <begin position="129"/>
        <end position="130"/>
    </location>
</feature>
<feature type="site" description="Cleavage; by viral protease" evidence="3">
    <location>
        <begin position="213"/>
        <end position="214"/>
    </location>
</feature>
<feature type="site" description="Cleavage; by viral protease" evidence="3">
    <location>
        <begin position="476"/>
        <end position="477"/>
    </location>
</feature>
<feature type="site" description="Cleavage; by viral protease" evidence="3">
    <location>
        <begin position="532"/>
        <end position="533"/>
    </location>
</feature>
<feature type="site" description="Cleavage; by viral protease" evidence="3">
    <location>
        <begin position="657"/>
        <end position="658"/>
    </location>
</feature>
<feature type="site" description="Cleavage; by viral protease" evidence="3">
    <location>
        <begin position="1328"/>
        <end position="1329"/>
    </location>
</feature>
<feature type="modified residue" description="Phosphoserine; by host" evidence="3">
    <location>
        <position position="190"/>
    </location>
</feature>
<feature type="lipid moiety-binding region" description="N-myristoyl glycine; by host" evidence="5">
    <location>
        <position position="2"/>
    </location>
</feature>
<feature type="sequence conflict" description="In Ref. 2; AAA46511." evidence="12" ref="2">
    <original>G</original>
    <variation>R</variation>
    <location>
        <position position="1460"/>
    </location>
</feature>
<organism>
    <name type="scientific">Cas-Br-E murine leukemia virus</name>
    <dbReference type="NCBI Taxonomy" id="11792"/>
    <lineage>
        <taxon>Viruses</taxon>
        <taxon>Riboviria</taxon>
        <taxon>Pararnavirae</taxon>
        <taxon>Artverviricota</taxon>
        <taxon>Revtraviricetes</taxon>
        <taxon>Ortervirales</taxon>
        <taxon>Retroviridae</taxon>
        <taxon>Orthoretrovirinae</taxon>
        <taxon>Gammaretrovirus</taxon>
        <taxon>Murine leukemia virus</taxon>
    </lineage>
</organism>
<keyword id="KW-0064">Aspartyl protease</keyword>
<keyword id="KW-0167">Capsid protein</keyword>
<keyword id="KW-0175">Coiled coil</keyword>
<keyword id="KW-0229">DNA integration</keyword>
<keyword id="KW-0233">DNA recombination</keyword>
<keyword id="KW-0238">DNA-binding</keyword>
<keyword id="KW-0239">DNA-directed DNA polymerase</keyword>
<keyword id="KW-0255">Endonuclease</keyword>
<keyword id="KW-1262">Eukaryotic host gene expression shutoff by virus</keyword>
<keyword id="KW-1193">Eukaryotic host translation shutoff by virus</keyword>
<keyword id="KW-1032">Host cell membrane</keyword>
<keyword id="KW-1035">Host cytoplasm</keyword>
<keyword id="KW-1039">Host endosome</keyword>
<keyword id="KW-1190">Host gene expression shutoff by virus</keyword>
<keyword id="KW-1043">Host membrane</keyword>
<keyword id="KW-0945">Host-virus interaction</keyword>
<keyword id="KW-0378">Hydrolase</keyword>
<keyword id="KW-0449">Lipoprotein</keyword>
<keyword id="KW-0460">Magnesium</keyword>
<keyword id="KW-0472">Membrane</keyword>
<keyword id="KW-0479">Metal-binding</keyword>
<keyword id="KW-0519">Myristate</keyword>
<keyword id="KW-0540">Nuclease</keyword>
<keyword id="KW-0548">Nucleotidyltransferase</keyword>
<keyword id="KW-0597">Phosphoprotein</keyword>
<keyword id="KW-0645">Protease</keyword>
<keyword id="KW-0694">RNA-binding</keyword>
<keyword id="KW-0695">RNA-directed DNA polymerase</keyword>
<keyword id="KW-0808">Transferase</keyword>
<keyword id="KW-0832">Ubl conjugation</keyword>
<keyword id="KW-1179">Viral genome integration</keyword>
<keyword id="KW-0468">Viral matrix protein</keyword>
<keyword id="KW-0543">Viral nucleoprotein</keyword>
<keyword id="KW-0946">Virion</keyword>
<keyword id="KW-1160">Virus entry into host cell</keyword>
<keyword id="KW-0862">Zinc</keyword>
<keyword id="KW-0863">Zinc-finger</keyword>
<reference key="1">
    <citation type="journal article" date="1991" name="Nucleic Acids Res.">
        <title>Complete nucleotide sequence of the neurotropic murine retrovirus CAS-BR-E.</title>
        <authorList>
            <person name="Perryman S.M."/>
            <person name="McAtee F.J."/>
            <person name="Portis J.L."/>
        </authorList>
    </citation>
    <scope>NUCLEOTIDE SEQUENCE [GENOMIC DNA]</scope>
</reference>
<reference key="2">
    <citation type="journal article" date="1986" name="J. Virol.">
        <title>Cas-Br-E murine leukemia virus: sequencing of the paralytogenic region of its genome and derivation of specific probes to study its origin and the structure of its recombinant genomes in leukemic tissues.</title>
        <authorList>
            <person name="Rassart E."/>
            <person name="Nelbach L."/>
            <person name="Jolicoeur P."/>
        </authorList>
    </citation>
    <scope>NUCLEOTIDE SEQUENCE [GENOMIC DNA] OF 1452-1733</scope>
</reference>
<accession>P08361</accession>
<protein>
    <recommendedName>
        <fullName>Gag-Pol polyprotein</fullName>
        <shortName>Pr180gag-pol</shortName>
    </recommendedName>
    <component>
        <recommendedName>
            <fullName>Matrix protein p15</fullName>
        </recommendedName>
    </component>
    <component>
        <recommendedName>
            <fullName>RNA-binding phosphoprotein p12</fullName>
        </recommendedName>
        <alternativeName>
            <fullName>pp12</fullName>
        </alternativeName>
    </component>
    <component>
        <recommendedName>
            <fullName>Capsid protein p30</fullName>
        </recommendedName>
    </component>
    <component>
        <recommendedName>
            <fullName>Nucleocapsid protein p10-Pol</fullName>
            <shortName>NC-pol</shortName>
        </recommendedName>
    </component>
    <component>
        <recommendedName>
            <fullName>Protease</fullName>
            <ecNumber evidence="7">3.4.23.-</ecNumber>
        </recommendedName>
    </component>
    <component>
        <recommendedName>
            <fullName>Reverse transcriptase/ribonuclease H</fullName>
            <shortName>RT</shortName>
            <ecNumber evidence="8">2.7.7.49</ecNumber>
            <ecNumber evidence="8">2.7.7.7</ecNumber>
            <ecNumber evidence="9">3.1.26.4</ecNumber>
        </recommendedName>
    </component>
    <component>
        <recommendedName>
            <fullName>Integrase</fullName>
            <shortName>IN</shortName>
            <ecNumber evidence="3">2.7.7.-</ecNumber>
            <ecNumber evidence="3">3.1.-.-</ecNumber>
        </recommendedName>
    </component>
</protein>
<proteinExistence type="inferred from homology"/>
<gene>
    <name type="primary">gag-pol</name>
</gene>
<organismHost>
    <name type="scientific">Mus musculus</name>
    <name type="common">Mouse</name>
    <dbReference type="NCBI Taxonomy" id="10090"/>
</organismHost>
<name>POL_MLVCB</name>
<sequence length="1733" mass="194519">MGQTVTTPLSLTLDHWKDVERTAHNQSVDVKKRRWVTFCSVEWPTFNVGWPQDGTFNRDIITQVKIKVFSPGPHGHPDQVPYIVTWEALAFDPPPWVKPFVHPKPPLPPSAPSLLPEPPLSTSPRSSLYPALTPSLGAKPKPQVLPDSGGPLIDLLTEDPPPYRDPGPPPSDRDRDDGEAAPAGEAPDPSPMASRLRGRRELPVADSTTSQAFPLRSGGNGQLQYWPFSSSDLYNWKNNNPSFSEDPGKLTALIESVLLTHQPTWDDCQQLLGTLLTGEEKQRVLLEARKAVRGEDGRPTQLPNEINDAFPLERPDWDYNTQRGRNHLVLYRQLLLAGLQNAGRSPTNLAKVKGITQGPNESPSAFLERLKEAYRRYTPYDPEDPGQETNVSMSFIWQSAPDIGRKLERLEDLKSKTLGDLVREAEKIFNKRETPEEREERIKRETEEKEERRRAEDEQKEKERDRRRHREMSKLLATVVSGQKQDRQGGERRRPQLDKDQCAYCKEKGHWAKDCPKKPRGPRGPRPQTSLLALDDQGGRGQEPPPEPRITLKVGGQPVTFLVDTGAQHSVLTQNPGPLSDKSAWVQGATGGKRYRWTTDRKVHLATGKVTHSFLHVPDCPYPLLGRDLLTKLNAQIHFEGSGAQVVGPRGQPLQVLTLNIEDEYRLHETSKEPDVSLGSTWLSDFPQAWAETGGMGLAVRQAPLIIPLKATSTPVSIKQYPMSQEARLGIKPHIQRLLDQGILVPCQSPWNTPLLPVKKPGTNDYRPVQDLREVNKRVEDIHPTVPNPYNLLSGLPPSHQWYTVLDLKDAFFCLRLHPTSQPLFAFEWRDPEMGISGQLTWTRLPQGFKNSPTLFDEALHRDLAGFRIQHPDLILLQYVDDLLLAATSELDCQQGTRALLQTLGDLGYRASAKKAQICQKQVKYLGYLLKEGQRWLTEARKETVMGQPIPKTPRQLREFLGTAGFCRLWIPGFAEMAAPLYPLTKTGTLFNWGPDQQKAFQEIKQALLTAPALGLPDLTKPFELFVDEKQGYAKGVLTQKLGPWRRPVAYLSKKLDPVAAGWPPCLRMVAAIAVLTKDAGKLTMGQPLVILAPHAVEALVKQPPDRWLSNARMTHYQALLLDTDRVQFGPVVALNPATLLPLPEEGLQHDCLDILAEAHGTRSDLMDQPLPDADHTWYTDGSSFLQEGQRKAGAAVTTETEVIWARALPAGTSAQRAELIALTQALKMAEGKKLNVYTDSRYAFATAHIHGEIYRRRGLLTSEGKEIKNKDEILALLKALFLPKRLSIIHCPGHQKGNSAEARGNRMADQAAREVATRETPETSTLLIENSTPYTHEHFHYTVTDTKDLTKLGATYDSAKKYWVYQGKPVMPDQFTFELLDFLHQLTHLSFSKTKALLERSPSPYYMLNRDRTLKNITETCKACAQVNASKSAVKQGTRVRGHRPGTHWEIDFTEVKPGLYGYKYLLVFVDTFSGWIEAFPTKKETAKVVTKKLLEEIFPRFGMPQVLGTDNGPAFVSKVSQTVADLLGIDWKLHCAYRPQSSGQVERMNRTIKETLTKLTLATGSRDWVLLLPLALYRARNTPGPHGLTPYEILYGAPPPLVNFPDPDMTRVTNSPSLQAHLQALYLVQHEVWRPLAAAYQEQLDRPVVPHPYRVGDTVWVRRHQTKNLEPRWKGPYTVLLTTPTALKVDGISAWVHAAHVKAATTSPARTAWKVQRSQNPLKIRLSREPS</sequence>
<evidence type="ECO:0000250" key="1">
    <source>
        <dbReference type="UniProtKB" id="P03332"/>
    </source>
</evidence>
<evidence type="ECO:0000250" key="2">
    <source>
        <dbReference type="UniProtKB" id="P03336"/>
    </source>
</evidence>
<evidence type="ECO:0000250" key="3">
    <source>
        <dbReference type="UniProtKB" id="P03355"/>
    </source>
</evidence>
<evidence type="ECO:0000250" key="4">
    <source>
        <dbReference type="UniProtKB" id="P26807"/>
    </source>
</evidence>
<evidence type="ECO:0000255" key="5"/>
<evidence type="ECO:0000255" key="6">
    <source>
        <dbReference type="PROSITE-ProRule" id="PRU00047"/>
    </source>
</evidence>
<evidence type="ECO:0000255" key="7">
    <source>
        <dbReference type="PROSITE-ProRule" id="PRU00275"/>
    </source>
</evidence>
<evidence type="ECO:0000255" key="8">
    <source>
        <dbReference type="PROSITE-ProRule" id="PRU00405"/>
    </source>
</evidence>
<evidence type="ECO:0000255" key="9">
    <source>
        <dbReference type="PROSITE-ProRule" id="PRU00408"/>
    </source>
</evidence>
<evidence type="ECO:0000255" key="10">
    <source>
        <dbReference type="PROSITE-ProRule" id="PRU00457"/>
    </source>
</evidence>
<evidence type="ECO:0000256" key="11">
    <source>
        <dbReference type="SAM" id="MobiDB-lite"/>
    </source>
</evidence>
<evidence type="ECO:0000305" key="12"/>